<proteinExistence type="evidence at protein level"/>
<protein>
    <recommendedName>
        <fullName>Vitronectin</fullName>
        <shortName>VN</shortName>
    </recommendedName>
    <alternativeName>
        <fullName>Glycoprotein 66</fullName>
    </alternativeName>
    <alternativeName>
        <fullName>S-protein</fullName>
    </alternativeName>
    <alternativeName>
        <fullName>Serum-spreading factor</fullName>
    </alternativeName>
</protein>
<evidence type="ECO:0000250" key="1"/>
<evidence type="ECO:0000250" key="2">
    <source>
        <dbReference type="UniProtKB" id="P04004"/>
    </source>
</evidence>
<evidence type="ECO:0000255" key="3"/>
<evidence type="ECO:0000255" key="4">
    <source>
        <dbReference type="PROSITE-ProRule" id="PRU00350"/>
    </source>
</evidence>
<evidence type="ECO:0000256" key="5">
    <source>
        <dbReference type="SAM" id="MobiDB-lite"/>
    </source>
</evidence>
<evidence type="ECO:0000269" key="6">
    <source>
    </source>
</evidence>
<evidence type="ECO:0000305" key="7"/>
<evidence type="ECO:0000305" key="8">
    <source>
    </source>
</evidence>
<feature type="signal peptide" evidence="6">
    <location>
        <begin position="1"/>
        <end position="19"/>
    </location>
</feature>
<feature type="chain" id="PRO_0000036400" description="Vitronectin">
    <location>
        <begin position="20"/>
        <end position="475"/>
    </location>
</feature>
<feature type="domain" description="SMB" evidence="4">
    <location>
        <begin position="20"/>
        <end position="63"/>
    </location>
</feature>
<feature type="repeat" description="Hemopexin 1">
    <location>
        <begin position="158"/>
        <end position="202"/>
    </location>
</feature>
<feature type="repeat" description="Hemopexin 2">
    <location>
        <begin position="203"/>
        <end position="250"/>
    </location>
</feature>
<feature type="repeat" description="Hemopexin 3">
    <location>
        <begin position="251"/>
        <end position="305"/>
    </location>
</feature>
<feature type="repeat" description="Hemopexin 4">
    <location>
        <begin position="419"/>
        <end position="469"/>
    </location>
</feature>
<feature type="region of interest" description="Disordered" evidence="5">
    <location>
        <begin position="87"/>
        <end position="123"/>
    </location>
</feature>
<feature type="region of interest" description="Disordered" evidence="5">
    <location>
        <begin position="359"/>
        <end position="391"/>
    </location>
</feature>
<feature type="region of interest" description="Glycosaminoglycan binding region">
    <location>
        <begin position="366"/>
        <end position="392"/>
    </location>
</feature>
<feature type="short sequence motif" description="Cell attachment site">
    <location>
        <begin position="64"/>
        <end position="66"/>
    </location>
</feature>
<feature type="compositionally biased region" description="Polar residues" evidence="5">
    <location>
        <begin position="95"/>
        <end position="109"/>
    </location>
</feature>
<feature type="compositionally biased region" description="Basic residues" evidence="5">
    <location>
        <begin position="366"/>
        <end position="384"/>
    </location>
</feature>
<feature type="modified residue" description="Phosphothreonine" evidence="2">
    <location>
        <position position="69"/>
    </location>
</feature>
<feature type="modified residue" description="Sulfotyrosine" evidence="3">
    <location>
        <position position="75"/>
    </location>
</feature>
<feature type="modified residue" description="Sulfotyrosine" evidence="3">
    <location>
        <position position="78"/>
    </location>
</feature>
<feature type="modified residue" description="Sulfotyrosine" evidence="3">
    <location>
        <position position="80"/>
    </location>
</feature>
<feature type="modified residue" description="Sulfotyrosine" evidence="3">
    <location>
        <position position="279"/>
    </location>
</feature>
<feature type="modified residue" description="Sulfotyrosine" evidence="3">
    <location>
        <position position="282"/>
    </location>
</feature>
<feature type="modified residue" description="Phosphoserine" evidence="2">
    <location>
        <position position="312"/>
    </location>
</feature>
<feature type="modified residue" description="Phosphoserine" evidence="2">
    <location>
        <position position="394"/>
    </location>
</feature>
<feature type="glycosylation site" description="N-linked (GlcNAc...) asparagine" evidence="8">
    <location>
        <position position="87"/>
    </location>
</feature>
<feature type="glycosylation site" description="N-linked (GlcNAc...) asparagine" evidence="8">
    <location>
        <position position="169"/>
    </location>
</feature>
<feature type="glycosylation site" description="N-linked (GlcNAc...) asparagine" evidence="8">
    <location>
        <position position="242"/>
    </location>
</feature>
<feature type="disulfide bond" description="Alternate" evidence="4">
    <location>
        <begin position="24"/>
        <end position="40"/>
    </location>
</feature>
<feature type="disulfide bond" description="Alternate" evidence="4">
    <location>
        <begin position="24"/>
        <end position="28"/>
    </location>
</feature>
<feature type="disulfide bond" description="Alternate" evidence="4">
    <location>
        <begin position="28"/>
        <end position="58"/>
    </location>
</feature>
<feature type="disulfide bond" description="Alternate" evidence="4">
    <location>
        <begin position="38"/>
        <end position="51"/>
    </location>
</feature>
<feature type="disulfide bond" description="Alternate" evidence="4">
    <location>
        <begin position="38"/>
        <end position="40"/>
    </location>
</feature>
<feature type="disulfide bond" evidence="4">
    <location>
        <begin position="44"/>
        <end position="50"/>
    </location>
</feature>
<feature type="disulfide bond" description="Alternate" evidence="4">
    <location>
        <begin position="51"/>
        <end position="58"/>
    </location>
</feature>
<feature type="sequence conflict" description="In Ref. 2; AA sequence." evidence="7" ref="2">
    <original>D</original>
    <variation>G</variation>
    <location>
        <position position="26"/>
    </location>
</feature>
<feature type="sequence conflict" description="In Ref. 2; AA sequence." evidence="7" ref="2">
    <original>AN</original>
    <variation>SD</variation>
    <location>
        <begin position="34"/>
        <end position="35"/>
    </location>
</feature>
<feature type="sequence conflict" description="In Ref. 2; AA sequence." evidence="7" ref="2">
    <original>C</original>
    <variation>P</variation>
    <location>
        <position position="44"/>
    </location>
</feature>
<gene>
    <name type="primary">VTN</name>
</gene>
<dbReference type="EMBL" id="M55442">
    <property type="protein sequence ID" value="AAA31258.1"/>
    <property type="molecule type" value="mRNA"/>
</dbReference>
<dbReference type="PIR" id="A38340">
    <property type="entry name" value="A38340"/>
</dbReference>
<dbReference type="RefSeq" id="NP_001075761.1">
    <property type="nucleotide sequence ID" value="NM_001082292.1"/>
</dbReference>
<dbReference type="SMR" id="P22458"/>
<dbReference type="CORUM" id="P22458"/>
<dbReference type="FunCoup" id="P22458">
    <property type="interactions" value="20"/>
</dbReference>
<dbReference type="STRING" id="9986.ENSOCUP00000024132"/>
<dbReference type="GlyCosmos" id="P22458">
    <property type="glycosylation" value="3 sites, No reported glycans"/>
</dbReference>
<dbReference type="iPTMnet" id="P22458"/>
<dbReference type="PaxDb" id="9986-ENSOCUP00000024132"/>
<dbReference type="GeneID" id="100009128"/>
<dbReference type="KEGG" id="ocu:100009128"/>
<dbReference type="CTD" id="7448"/>
<dbReference type="eggNOG" id="KOG1565">
    <property type="taxonomic scope" value="Eukaryota"/>
</dbReference>
<dbReference type="InParanoid" id="P22458"/>
<dbReference type="OrthoDB" id="9898692at2759"/>
<dbReference type="Proteomes" id="UP000001811">
    <property type="component" value="Unplaced"/>
</dbReference>
<dbReference type="GO" id="GO:0005615">
    <property type="term" value="C:extracellular space"/>
    <property type="evidence" value="ECO:0007669"/>
    <property type="project" value="TreeGrafter"/>
</dbReference>
<dbReference type="GO" id="GO:0050840">
    <property type="term" value="F:extracellular matrix binding"/>
    <property type="evidence" value="ECO:0007669"/>
    <property type="project" value="TreeGrafter"/>
</dbReference>
<dbReference type="GO" id="GO:0008201">
    <property type="term" value="F:heparin binding"/>
    <property type="evidence" value="ECO:0007669"/>
    <property type="project" value="UniProtKB-KW"/>
</dbReference>
<dbReference type="GO" id="GO:0005178">
    <property type="term" value="F:integrin binding"/>
    <property type="evidence" value="ECO:0007669"/>
    <property type="project" value="TreeGrafter"/>
</dbReference>
<dbReference type="GO" id="GO:0030247">
    <property type="term" value="F:polysaccharide binding"/>
    <property type="evidence" value="ECO:0007669"/>
    <property type="project" value="InterPro"/>
</dbReference>
<dbReference type="GO" id="GO:0005044">
    <property type="term" value="F:scavenger receptor activity"/>
    <property type="evidence" value="ECO:0007669"/>
    <property type="project" value="InterPro"/>
</dbReference>
<dbReference type="GO" id="GO:0033627">
    <property type="term" value="P:cell adhesion mediated by integrin"/>
    <property type="evidence" value="ECO:0007669"/>
    <property type="project" value="TreeGrafter"/>
</dbReference>
<dbReference type="GO" id="GO:0007160">
    <property type="term" value="P:cell-matrix adhesion"/>
    <property type="evidence" value="ECO:0007669"/>
    <property type="project" value="TreeGrafter"/>
</dbReference>
<dbReference type="GO" id="GO:0006955">
    <property type="term" value="P:immune response"/>
    <property type="evidence" value="ECO:0007669"/>
    <property type="project" value="InterPro"/>
</dbReference>
<dbReference type="CDD" id="cd00094">
    <property type="entry name" value="HX"/>
    <property type="match status" value="1"/>
</dbReference>
<dbReference type="FunFam" id="2.110.10.10:FF:000010">
    <property type="entry name" value="vitronectin"/>
    <property type="match status" value="1"/>
</dbReference>
<dbReference type="Gene3D" id="4.10.410.20">
    <property type="match status" value="1"/>
</dbReference>
<dbReference type="Gene3D" id="2.110.10.10">
    <property type="entry name" value="Hemopexin-like domain"/>
    <property type="match status" value="2"/>
</dbReference>
<dbReference type="InterPro" id="IPR051298">
    <property type="entry name" value="Heme_transport/Cell_adhesion"/>
</dbReference>
<dbReference type="InterPro" id="IPR000585">
    <property type="entry name" value="Hemopexin-like_dom"/>
</dbReference>
<dbReference type="InterPro" id="IPR036375">
    <property type="entry name" value="Hemopexin-like_dom_sf"/>
</dbReference>
<dbReference type="InterPro" id="IPR018487">
    <property type="entry name" value="Hemopexin-like_repeat"/>
</dbReference>
<dbReference type="InterPro" id="IPR018486">
    <property type="entry name" value="Hemopexin_CS"/>
</dbReference>
<dbReference type="InterPro" id="IPR020436">
    <property type="entry name" value="SMB_chordata"/>
</dbReference>
<dbReference type="InterPro" id="IPR036024">
    <property type="entry name" value="Somatomedin_B-like_dom_sf"/>
</dbReference>
<dbReference type="InterPro" id="IPR001212">
    <property type="entry name" value="Somatomedin_B_dom"/>
</dbReference>
<dbReference type="PANTHER" id="PTHR22917">
    <property type="entry name" value="HEMOPEXIN DOMAIN-CONTAINING PROTEIN"/>
    <property type="match status" value="1"/>
</dbReference>
<dbReference type="PANTHER" id="PTHR22917:SF3">
    <property type="entry name" value="VITRONECTIN"/>
    <property type="match status" value="1"/>
</dbReference>
<dbReference type="Pfam" id="PF00045">
    <property type="entry name" value="Hemopexin"/>
    <property type="match status" value="4"/>
</dbReference>
<dbReference type="Pfam" id="PF01033">
    <property type="entry name" value="Somatomedin_B"/>
    <property type="match status" value="1"/>
</dbReference>
<dbReference type="PRINTS" id="PR00022">
    <property type="entry name" value="SOMATOMEDINB"/>
</dbReference>
<dbReference type="SMART" id="SM00120">
    <property type="entry name" value="HX"/>
    <property type="match status" value="4"/>
</dbReference>
<dbReference type="SMART" id="SM00201">
    <property type="entry name" value="SO"/>
    <property type="match status" value="1"/>
</dbReference>
<dbReference type="SUPFAM" id="SSF50923">
    <property type="entry name" value="Hemopexin-like domain"/>
    <property type="match status" value="1"/>
</dbReference>
<dbReference type="SUPFAM" id="SSF90188">
    <property type="entry name" value="Somatomedin B domain"/>
    <property type="match status" value="1"/>
</dbReference>
<dbReference type="PROSITE" id="PS00024">
    <property type="entry name" value="HEMOPEXIN"/>
    <property type="match status" value="2"/>
</dbReference>
<dbReference type="PROSITE" id="PS51642">
    <property type="entry name" value="HEMOPEXIN_2"/>
    <property type="match status" value="4"/>
</dbReference>
<dbReference type="PROSITE" id="PS00524">
    <property type="entry name" value="SMB_1"/>
    <property type="match status" value="1"/>
</dbReference>
<dbReference type="PROSITE" id="PS50958">
    <property type="entry name" value="SMB_2"/>
    <property type="match status" value="1"/>
</dbReference>
<accession>P22458</accession>
<reference key="1">
    <citation type="journal article" date="1990" name="J. Biol. Chem.">
        <title>Monoclonal antibody EMR1a/212D recognizing site of deposition of extracellular lipid in atherosclerosis. Isolation and characterization of a cDNA clone for the antigen.</title>
        <authorList>
            <person name="Sato R."/>
            <person name="Komine Y."/>
            <person name="Imanaka T."/>
            <person name="Takano T."/>
        </authorList>
    </citation>
    <scope>NUCLEOTIDE SEQUENCE [MRNA]</scope>
    <scope>PARTIAL PROTEIN SEQUENCE</scope>
</reference>
<reference key="2">
    <citation type="journal article" date="1992" name="Biochim. Biophys. Acta">
        <title>Vitronectin diversity in evolution but uniformity in ligand binding and size of the core polypeptide.</title>
        <authorList>
            <person name="Nakashima N."/>
            <person name="Miyazaki K."/>
            <person name="Ishikawa M."/>
            <person name="Yatohgo T."/>
            <person name="Ogawa H."/>
            <person name="Uchibori H."/>
            <person name="Matsumoto I."/>
            <person name="Seno N."/>
            <person name="Hayashi M."/>
        </authorList>
    </citation>
    <scope>PROTEIN SEQUENCE OF 20-44</scope>
    <scope>GLYCOSYLATION</scope>
</reference>
<comment type="function">
    <text>Vitronectin is a cell adhesion and spreading factor found in serum and tissues. Vitronectin interact with glycosaminoglycans and proteoglycans. Is recognized by certain members of the integrin family and serves as a cell-to-substrate adhesion molecule. Inhibitor of the membrane-damaging effect of the terminal cytolytic complement pathway.</text>
</comment>
<comment type="subunit">
    <text evidence="1">Interacts with SERPINE1/PAI1 and C1QBP (By similarity). Monomer.</text>
</comment>
<comment type="subcellular location">
    <subcellularLocation>
        <location>Secreted</location>
        <location>Extracellular space</location>
    </subcellularLocation>
</comment>
<comment type="tissue specificity">
    <text>Plasma.</text>
</comment>
<comment type="domain">
    <text evidence="1">The SMB domain mediates interaction with SERPINE1/PAI1.</text>
</comment>
<comment type="PTM">
    <text evidence="2">Sulfated on tyrosine residues.</text>
</comment>
<comment type="PTM">
    <text evidence="6">N- and O-glycosylated.</text>
</comment>
<comment type="PTM">
    <text>It has been suggested that the active SMB domain may be permitted considerable disulfide bond heterogeneity or variability, thus two alternate disulfide patterns based on 3D structures are described with 1 disulfide bond conserved in both.</text>
</comment>
<organism>
    <name type="scientific">Oryctolagus cuniculus</name>
    <name type="common">Rabbit</name>
    <dbReference type="NCBI Taxonomy" id="9986"/>
    <lineage>
        <taxon>Eukaryota</taxon>
        <taxon>Metazoa</taxon>
        <taxon>Chordata</taxon>
        <taxon>Craniata</taxon>
        <taxon>Vertebrata</taxon>
        <taxon>Euteleostomi</taxon>
        <taxon>Mammalia</taxon>
        <taxon>Eutheria</taxon>
        <taxon>Euarchontoglires</taxon>
        <taxon>Glires</taxon>
        <taxon>Lagomorpha</taxon>
        <taxon>Leporidae</taxon>
        <taxon>Oryctolagus</taxon>
    </lineage>
</organism>
<keyword id="KW-0130">Cell adhesion</keyword>
<keyword id="KW-0903">Direct protein sequencing</keyword>
<keyword id="KW-1015">Disulfide bond</keyword>
<keyword id="KW-0325">Glycoprotein</keyword>
<keyword id="KW-0358">Heparin-binding</keyword>
<keyword id="KW-0597">Phosphoprotein</keyword>
<keyword id="KW-1185">Reference proteome</keyword>
<keyword id="KW-0677">Repeat</keyword>
<keyword id="KW-0964">Secreted</keyword>
<keyword id="KW-0732">Signal</keyword>
<keyword id="KW-0765">Sulfation</keyword>
<name>VTNC_RABIT</name>
<sequence>MAPLRPIFTLALLLWVVLADQESCKDRCTEGFNANRKCQCDELCSYYQSCCADYAAECKPQVTRGDVFTMPEDEYGPYDYIEQTKDNASVHAQPESPTVGQEPTLSPDLQTEGGAEPTHEVPLEPEMETLRPEGEDLQAGTTELGTSASPAEEELCSGKPFDAFTDLKNGSLFAFRGQYCYELDETAVRPGYPKLIQDVWGIEGPIDAAFTRINCQGKTYLFKGSQYWRFEDGILDPDYPRNISEGFSGIPDNVDAAFALPAHSYSGRERVYFFKGDKYWEYQFQQQPSQEECEGSSLSAVFEHFAMLHRDSWEDIFKLLFWGRPSGGARQPQFISRDWHGVPGKVDAAMAGRIYISGLTPSPSAKKQKSRRRSRKRYRSRYGRGRSQNSRRLSRSISRLWFSSEEVSLGPYNYEDYETSWLKPATSEPIQSVYFFSGDKYYRVNLRTQRVDTVNPPYPRSIAQYWLGCPAPGGQ</sequence>